<protein>
    <recommendedName>
        <fullName evidence="1">Cell division topological specificity factor</fullName>
    </recommendedName>
</protein>
<dbReference type="EMBL" id="AE006468">
    <property type="protein sequence ID" value="AAL20731.1"/>
    <property type="molecule type" value="Genomic_DNA"/>
</dbReference>
<dbReference type="RefSeq" id="NP_460772.1">
    <property type="nucleotide sequence ID" value="NC_003197.2"/>
</dbReference>
<dbReference type="RefSeq" id="WP_001185666.1">
    <property type="nucleotide sequence ID" value="NC_003197.2"/>
</dbReference>
<dbReference type="SMR" id="P65363"/>
<dbReference type="STRING" id="99287.STM1816"/>
<dbReference type="PaxDb" id="99287-STM1816"/>
<dbReference type="GeneID" id="1253335"/>
<dbReference type="GeneID" id="92972923"/>
<dbReference type="KEGG" id="stm:STM1816"/>
<dbReference type="PATRIC" id="fig|99287.12.peg.1916"/>
<dbReference type="HOGENOM" id="CLU_137929_2_2_6"/>
<dbReference type="OMA" id="FNKQRTA"/>
<dbReference type="PhylomeDB" id="P65363"/>
<dbReference type="BioCyc" id="SENT99287:STM1816-MONOMER"/>
<dbReference type="Proteomes" id="UP000001014">
    <property type="component" value="Chromosome"/>
</dbReference>
<dbReference type="GO" id="GO:0005886">
    <property type="term" value="C:plasma membrane"/>
    <property type="evidence" value="ECO:0000318"/>
    <property type="project" value="GO_Central"/>
</dbReference>
<dbReference type="GO" id="GO:0000918">
    <property type="term" value="P:division septum site selection"/>
    <property type="evidence" value="ECO:0000318"/>
    <property type="project" value="GO_Central"/>
</dbReference>
<dbReference type="GO" id="GO:0032955">
    <property type="term" value="P:regulation of division septum assembly"/>
    <property type="evidence" value="ECO:0007669"/>
    <property type="project" value="InterPro"/>
</dbReference>
<dbReference type="FunFam" id="3.30.1070.10:FF:000001">
    <property type="entry name" value="Cell division topological specificity factor"/>
    <property type="match status" value="1"/>
</dbReference>
<dbReference type="Gene3D" id="3.30.1070.10">
    <property type="entry name" value="Cell division topological specificity factor MinE"/>
    <property type="match status" value="1"/>
</dbReference>
<dbReference type="HAMAP" id="MF_00262">
    <property type="entry name" value="MinE"/>
    <property type="match status" value="1"/>
</dbReference>
<dbReference type="InterPro" id="IPR005527">
    <property type="entry name" value="MinE"/>
</dbReference>
<dbReference type="InterPro" id="IPR036707">
    <property type="entry name" value="MinE_sf"/>
</dbReference>
<dbReference type="NCBIfam" id="TIGR01215">
    <property type="entry name" value="minE"/>
    <property type="match status" value="1"/>
</dbReference>
<dbReference type="NCBIfam" id="NF001422">
    <property type="entry name" value="PRK00296.1"/>
    <property type="match status" value="1"/>
</dbReference>
<dbReference type="Pfam" id="PF03776">
    <property type="entry name" value="MinE"/>
    <property type="match status" value="1"/>
</dbReference>
<dbReference type="SUPFAM" id="SSF55229">
    <property type="entry name" value="Cell division protein MinE topological specificity domain"/>
    <property type="match status" value="1"/>
</dbReference>
<gene>
    <name evidence="1" type="primary">minE</name>
    <name type="ordered locus">STM1816</name>
</gene>
<name>MINE_SALTY</name>
<organism>
    <name type="scientific">Salmonella typhimurium (strain LT2 / SGSC1412 / ATCC 700720)</name>
    <dbReference type="NCBI Taxonomy" id="99287"/>
    <lineage>
        <taxon>Bacteria</taxon>
        <taxon>Pseudomonadati</taxon>
        <taxon>Pseudomonadota</taxon>
        <taxon>Gammaproteobacteria</taxon>
        <taxon>Enterobacterales</taxon>
        <taxon>Enterobacteriaceae</taxon>
        <taxon>Salmonella</taxon>
    </lineage>
</organism>
<evidence type="ECO:0000255" key="1">
    <source>
        <dbReference type="HAMAP-Rule" id="MF_00262"/>
    </source>
</evidence>
<feature type="chain" id="PRO_0000205887" description="Cell division topological specificity factor">
    <location>
        <begin position="1"/>
        <end position="88"/>
    </location>
</feature>
<reference key="1">
    <citation type="journal article" date="2001" name="Nature">
        <title>Complete genome sequence of Salmonella enterica serovar Typhimurium LT2.</title>
        <authorList>
            <person name="McClelland M."/>
            <person name="Sanderson K.E."/>
            <person name="Spieth J."/>
            <person name="Clifton S.W."/>
            <person name="Latreille P."/>
            <person name="Courtney L."/>
            <person name="Porwollik S."/>
            <person name="Ali J."/>
            <person name="Dante M."/>
            <person name="Du F."/>
            <person name="Hou S."/>
            <person name="Layman D."/>
            <person name="Leonard S."/>
            <person name="Nguyen C."/>
            <person name="Scott K."/>
            <person name="Holmes A."/>
            <person name="Grewal N."/>
            <person name="Mulvaney E."/>
            <person name="Ryan E."/>
            <person name="Sun H."/>
            <person name="Florea L."/>
            <person name="Miller W."/>
            <person name="Stoneking T."/>
            <person name="Nhan M."/>
            <person name="Waterston R."/>
            <person name="Wilson R.K."/>
        </authorList>
    </citation>
    <scope>NUCLEOTIDE SEQUENCE [LARGE SCALE GENOMIC DNA]</scope>
    <source>
        <strain>LT2 / SGSC1412 / ATCC 700720</strain>
    </source>
</reference>
<keyword id="KW-0131">Cell cycle</keyword>
<keyword id="KW-0132">Cell division</keyword>
<keyword id="KW-1185">Reference proteome</keyword>
<proteinExistence type="inferred from homology"/>
<accession>P65363</accession>
<accession>Q8XGH2</accession>
<sequence>MALLDFFLSRKKSTANIAKERLQIIVAERRRSDAEPHYLPQLRKDILEVICKYVQIDPEMVTVQLEQKDGDISILELNVTLPEAEESK</sequence>
<comment type="function">
    <text evidence="1">Prevents the cell division inhibition by proteins MinC and MinD at internal division sites while permitting inhibition at polar sites. This ensures cell division at the proper site by restricting the formation of a division septum at the midpoint of the long axis of the cell.</text>
</comment>
<comment type="similarity">
    <text evidence="1">Belongs to the MinE family.</text>
</comment>